<gene>
    <name evidence="1" type="primary">smg</name>
    <name type="ordered locus">Mpe_A0280</name>
</gene>
<comment type="similarity">
    <text evidence="1">Belongs to the Smg family.</text>
</comment>
<name>SMG_METPP</name>
<feature type="chain" id="PRO_1000025655" description="Protein Smg homolog">
    <location>
        <begin position="1"/>
        <end position="150"/>
    </location>
</feature>
<protein>
    <recommendedName>
        <fullName evidence="1">Protein Smg homolog</fullName>
    </recommendedName>
</protein>
<dbReference type="EMBL" id="CP000555">
    <property type="protein sequence ID" value="ABM93242.1"/>
    <property type="molecule type" value="Genomic_DNA"/>
</dbReference>
<dbReference type="RefSeq" id="WP_011827881.1">
    <property type="nucleotide sequence ID" value="NC_008825.1"/>
</dbReference>
<dbReference type="SMR" id="A2SCF3"/>
<dbReference type="STRING" id="420662.Mpe_A0280"/>
<dbReference type="KEGG" id="mpt:Mpe_A0280"/>
<dbReference type="eggNOG" id="COG2922">
    <property type="taxonomic scope" value="Bacteria"/>
</dbReference>
<dbReference type="HOGENOM" id="CLU_133242_0_0_4"/>
<dbReference type="Proteomes" id="UP000000366">
    <property type="component" value="Chromosome"/>
</dbReference>
<dbReference type="HAMAP" id="MF_00598">
    <property type="entry name" value="Smg"/>
    <property type="match status" value="1"/>
</dbReference>
<dbReference type="InterPro" id="IPR007456">
    <property type="entry name" value="Smg"/>
</dbReference>
<dbReference type="PANTHER" id="PTHR38692">
    <property type="entry name" value="PROTEIN SMG"/>
    <property type="match status" value="1"/>
</dbReference>
<dbReference type="PANTHER" id="PTHR38692:SF1">
    <property type="entry name" value="PROTEIN SMG"/>
    <property type="match status" value="1"/>
</dbReference>
<dbReference type="Pfam" id="PF04361">
    <property type="entry name" value="DUF494"/>
    <property type="match status" value="1"/>
</dbReference>
<sequence>MFDVLVYLYENYWQPDACPDHRQLSRKLSAVGFENEEIEDALSWLDGLATAAESHSGEQSAHALRVYSPMEQEHLGEASIGFVSFLESAGVLRAPMREMVIDRAMAIPAGPLAVEDLKIIVLMVFWSLGEEPDALILDELFVDDEDRLIH</sequence>
<evidence type="ECO:0000255" key="1">
    <source>
        <dbReference type="HAMAP-Rule" id="MF_00598"/>
    </source>
</evidence>
<reference key="1">
    <citation type="journal article" date="2007" name="J. Bacteriol.">
        <title>Whole-genome analysis of the methyl tert-butyl ether-degrading beta-proteobacterium Methylibium petroleiphilum PM1.</title>
        <authorList>
            <person name="Kane S.R."/>
            <person name="Chakicherla A.Y."/>
            <person name="Chain P.S.G."/>
            <person name="Schmidt R."/>
            <person name="Shin M.W."/>
            <person name="Legler T.C."/>
            <person name="Scow K.M."/>
            <person name="Larimer F.W."/>
            <person name="Lucas S.M."/>
            <person name="Richardson P.M."/>
            <person name="Hristova K.R."/>
        </authorList>
    </citation>
    <scope>NUCLEOTIDE SEQUENCE [LARGE SCALE GENOMIC DNA]</scope>
    <source>
        <strain>ATCC BAA-1232 / LMG 22953 / PM1</strain>
    </source>
</reference>
<accession>A2SCF3</accession>
<organism>
    <name type="scientific">Methylibium petroleiphilum (strain ATCC BAA-1232 / LMG 22953 / PM1)</name>
    <dbReference type="NCBI Taxonomy" id="420662"/>
    <lineage>
        <taxon>Bacteria</taxon>
        <taxon>Pseudomonadati</taxon>
        <taxon>Pseudomonadota</taxon>
        <taxon>Betaproteobacteria</taxon>
        <taxon>Burkholderiales</taxon>
        <taxon>Sphaerotilaceae</taxon>
        <taxon>Methylibium</taxon>
    </lineage>
</organism>
<proteinExistence type="inferred from homology"/>
<keyword id="KW-1185">Reference proteome</keyword>